<feature type="chain" id="PRO_1000087079" description="Large ribosomal subunit protein uL13">
    <location>
        <begin position="1"/>
        <end position="144"/>
    </location>
</feature>
<proteinExistence type="inferred from homology"/>
<dbReference type="EMBL" id="CP000909">
    <property type="protein sequence ID" value="ABY35608.1"/>
    <property type="molecule type" value="Genomic_DNA"/>
</dbReference>
<dbReference type="RefSeq" id="WP_012258261.1">
    <property type="nucleotide sequence ID" value="NC_010175.1"/>
</dbReference>
<dbReference type="RefSeq" id="YP_001635997.1">
    <property type="nucleotide sequence ID" value="NC_010175.1"/>
</dbReference>
<dbReference type="SMR" id="A9WH96"/>
<dbReference type="FunCoup" id="A9WH96">
    <property type="interactions" value="510"/>
</dbReference>
<dbReference type="STRING" id="324602.Caur_2399"/>
<dbReference type="EnsemblBacteria" id="ABY35608">
    <property type="protein sequence ID" value="ABY35608"/>
    <property type="gene ID" value="Caur_2399"/>
</dbReference>
<dbReference type="KEGG" id="cau:Caur_2399"/>
<dbReference type="PATRIC" id="fig|324602.8.peg.2713"/>
<dbReference type="eggNOG" id="COG0102">
    <property type="taxonomic scope" value="Bacteria"/>
</dbReference>
<dbReference type="HOGENOM" id="CLU_082184_2_2_0"/>
<dbReference type="InParanoid" id="A9WH96"/>
<dbReference type="Proteomes" id="UP000002008">
    <property type="component" value="Chromosome"/>
</dbReference>
<dbReference type="GO" id="GO:0022625">
    <property type="term" value="C:cytosolic large ribosomal subunit"/>
    <property type="evidence" value="ECO:0000318"/>
    <property type="project" value="GO_Central"/>
</dbReference>
<dbReference type="GO" id="GO:0005840">
    <property type="term" value="C:ribosome"/>
    <property type="evidence" value="ECO:0000318"/>
    <property type="project" value="GO_Central"/>
</dbReference>
<dbReference type="GO" id="GO:0003729">
    <property type="term" value="F:mRNA binding"/>
    <property type="evidence" value="ECO:0000318"/>
    <property type="project" value="GO_Central"/>
</dbReference>
<dbReference type="GO" id="GO:0003735">
    <property type="term" value="F:structural constituent of ribosome"/>
    <property type="evidence" value="ECO:0000318"/>
    <property type="project" value="GO_Central"/>
</dbReference>
<dbReference type="GO" id="GO:0017148">
    <property type="term" value="P:negative regulation of translation"/>
    <property type="evidence" value="ECO:0000318"/>
    <property type="project" value="GO_Central"/>
</dbReference>
<dbReference type="GO" id="GO:0006412">
    <property type="term" value="P:translation"/>
    <property type="evidence" value="ECO:0007669"/>
    <property type="project" value="UniProtKB-UniRule"/>
</dbReference>
<dbReference type="CDD" id="cd00392">
    <property type="entry name" value="Ribosomal_L13"/>
    <property type="match status" value="1"/>
</dbReference>
<dbReference type="FunFam" id="3.90.1180.10:FF:000001">
    <property type="entry name" value="50S ribosomal protein L13"/>
    <property type="match status" value="1"/>
</dbReference>
<dbReference type="Gene3D" id="3.90.1180.10">
    <property type="entry name" value="Ribosomal protein L13"/>
    <property type="match status" value="1"/>
</dbReference>
<dbReference type="HAMAP" id="MF_01366">
    <property type="entry name" value="Ribosomal_uL13"/>
    <property type="match status" value="1"/>
</dbReference>
<dbReference type="InterPro" id="IPR005822">
    <property type="entry name" value="Ribosomal_uL13"/>
</dbReference>
<dbReference type="InterPro" id="IPR005823">
    <property type="entry name" value="Ribosomal_uL13_bac-type"/>
</dbReference>
<dbReference type="InterPro" id="IPR023563">
    <property type="entry name" value="Ribosomal_uL13_CS"/>
</dbReference>
<dbReference type="InterPro" id="IPR036899">
    <property type="entry name" value="Ribosomal_uL13_sf"/>
</dbReference>
<dbReference type="NCBIfam" id="TIGR01066">
    <property type="entry name" value="rplM_bact"/>
    <property type="match status" value="1"/>
</dbReference>
<dbReference type="PANTHER" id="PTHR11545:SF2">
    <property type="entry name" value="LARGE RIBOSOMAL SUBUNIT PROTEIN UL13M"/>
    <property type="match status" value="1"/>
</dbReference>
<dbReference type="PANTHER" id="PTHR11545">
    <property type="entry name" value="RIBOSOMAL PROTEIN L13"/>
    <property type="match status" value="1"/>
</dbReference>
<dbReference type="Pfam" id="PF00572">
    <property type="entry name" value="Ribosomal_L13"/>
    <property type="match status" value="1"/>
</dbReference>
<dbReference type="PIRSF" id="PIRSF002181">
    <property type="entry name" value="Ribosomal_L13"/>
    <property type="match status" value="1"/>
</dbReference>
<dbReference type="SUPFAM" id="SSF52161">
    <property type="entry name" value="Ribosomal protein L13"/>
    <property type="match status" value="1"/>
</dbReference>
<dbReference type="PROSITE" id="PS00783">
    <property type="entry name" value="RIBOSOMAL_L13"/>
    <property type="match status" value="1"/>
</dbReference>
<organism>
    <name type="scientific">Chloroflexus aurantiacus (strain ATCC 29366 / DSM 635 / J-10-fl)</name>
    <dbReference type="NCBI Taxonomy" id="324602"/>
    <lineage>
        <taxon>Bacteria</taxon>
        <taxon>Bacillati</taxon>
        <taxon>Chloroflexota</taxon>
        <taxon>Chloroflexia</taxon>
        <taxon>Chloroflexales</taxon>
        <taxon>Chloroflexineae</taxon>
        <taxon>Chloroflexaceae</taxon>
        <taxon>Chloroflexus</taxon>
    </lineage>
</organism>
<sequence length="144" mass="16553">MKTYHQKPTEVQRDWYVIDASGKVLGRLATQISTLLRGKHKPTFTPSIDGGDFVIVVNAEKIVLTGRKPDQKIYYRHTGYPGGIKATPYKMMLAKHPDRILRLAVKRMLPKNRMGRRLLSKLRIYAGPNHPHAAQQPKPYIPRW</sequence>
<gene>
    <name evidence="1" type="primary">rplM</name>
    <name type="ordered locus">Caur_2399</name>
</gene>
<name>RL13_CHLAA</name>
<reference key="1">
    <citation type="journal article" date="2011" name="BMC Genomics">
        <title>Complete genome sequence of the filamentous anoxygenic phototrophic bacterium Chloroflexus aurantiacus.</title>
        <authorList>
            <person name="Tang K.H."/>
            <person name="Barry K."/>
            <person name="Chertkov O."/>
            <person name="Dalin E."/>
            <person name="Han C.S."/>
            <person name="Hauser L.J."/>
            <person name="Honchak B.M."/>
            <person name="Karbach L.E."/>
            <person name="Land M.L."/>
            <person name="Lapidus A."/>
            <person name="Larimer F.W."/>
            <person name="Mikhailova N."/>
            <person name="Pitluck S."/>
            <person name="Pierson B.K."/>
            <person name="Blankenship R.E."/>
        </authorList>
    </citation>
    <scope>NUCLEOTIDE SEQUENCE [LARGE SCALE GENOMIC DNA]</scope>
    <source>
        <strain>ATCC 29366 / DSM 635 / J-10-fl</strain>
    </source>
</reference>
<protein>
    <recommendedName>
        <fullName evidence="1">Large ribosomal subunit protein uL13</fullName>
    </recommendedName>
    <alternativeName>
        <fullName evidence="2">50S ribosomal protein L13</fullName>
    </alternativeName>
</protein>
<comment type="function">
    <text evidence="1">This protein is one of the early assembly proteins of the 50S ribosomal subunit, although it is not seen to bind rRNA by itself. It is important during the early stages of 50S assembly.</text>
</comment>
<comment type="subunit">
    <text evidence="1">Part of the 50S ribosomal subunit.</text>
</comment>
<comment type="similarity">
    <text evidence="1">Belongs to the universal ribosomal protein uL13 family.</text>
</comment>
<evidence type="ECO:0000255" key="1">
    <source>
        <dbReference type="HAMAP-Rule" id="MF_01366"/>
    </source>
</evidence>
<evidence type="ECO:0000305" key="2"/>
<keyword id="KW-1185">Reference proteome</keyword>
<keyword id="KW-0687">Ribonucleoprotein</keyword>
<keyword id="KW-0689">Ribosomal protein</keyword>
<accession>A9WH96</accession>